<comment type="function">
    <text evidence="1">Phosphorylation of dTMP to form dTDP in both de novo and salvage pathways of dTTP synthesis.</text>
</comment>
<comment type="catalytic activity">
    <reaction evidence="1">
        <text>dTMP + ATP = dTDP + ADP</text>
        <dbReference type="Rhea" id="RHEA:13517"/>
        <dbReference type="ChEBI" id="CHEBI:30616"/>
        <dbReference type="ChEBI" id="CHEBI:58369"/>
        <dbReference type="ChEBI" id="CHEBI:63528"/>
        <dbReference type="ChEBI" id="CHEBI:456216"/>
        <dbReference type="EC" id="2.7.4.9"/>
    </reaction>
</comment>
<comment type="similarity">
    <text evidence="1">Belongs to the thymidylate kinase family.</text>
</comment>
<sequence>MRSKYIVIEGLEGAGKTTARNVVVETLEQLGIRDMVFTREPGGTQLAEKLRSLVLDIKSVGDEVITDKAEVLMFYAARVQLVETVIKPALANGTWVIGDRHDLSTQAYQGGGRGIDQHMLATLRDAVLGDFRPDLTLYLDVTPEVGLKRARARGELDRIEQESFDFFNRTRARYLELAAQDKSIHTIDATQPLEAVMDAIRTTVTHWVKELDA</sequence>
<accession>Q32EV8</accession>
<feature type="chain" id="PRO_1000023282" description="Thymidylate kinase">
    <location>
        <begin position="1"/>
        <end position="213"/>
    </location>
</feature>
<feature type="binding site" evidence="1">
    <location>
        <begin position="10"/>
        <end position="17"/>
    </location>
    <ligand>
        <name>ATP</name>
        <dbReference type="ChEBI" id="CHEBI:30616"/>
    </ligand>
</feature>
<organism>
    <name type="scientific">Shigella dysenteriae serotype 1 (strain Sd197)</name>
    <dbReference type="NCBI Taxonomy" id="300267"/>
    <lineage>
        <taxon>Bacteria</taxon>
        <taxon>Pseudomonadati</taxon>
        <taxon>Pseudomonadota</taxon>
        <taxon>Gammaproteobacteria</taxon>
        <taxon>Enterobacterales</taxon>
        <taxon>Enterobacteriaceae</taxon>
        <taxon>Shigella</taxon>
    </lineage>
</organism>
<dbReference type="EC" id="2.7.4.9" evidence="1"/>
<dbReference type="EMBL" id="CP000034">
    <property type="protein sequence ID" value="ABB62147.1"/>
    <property type="molecule type" value="Genomic_DNA"/>
</dbReference>
<dbReference type="RefSeq" id="WP_001257000.1">
    <property type="nucleotide sequence ID" value="NC_007606.1"/>
</dbReference>
<dbReference type="RefSeq" id="YP_403638.1">
    <property type="nucleotide sequence ID" value="NC_007606.1"/>
</dbReference>
<dbReference type="SMR" id="Q32EV8"/>
<dbReference type="STRING" id="300267.SDY_2052"/>
<dbReference type="EnsemblBacteria" id="ABB62147">
    <property type="protein sequence ID" value="ABB62147"/>
    <property type="gene ID" value="SDY_2052"/>
</dbReference>
<dbReference type="GeneID" id="93776310"/>
<dbReference type="KEGG" id="sdy:SDY_2052"/>
<dbReference type="PATRIC" id="fig|300267.13.peg.2467"/>
<dbReference type="HOGENOM" id="CLU_049131_0_1_6"/>
<dbReference type="Proteomes" id="UP000002716">
    <property type="component" value="Chromosome"/>
</dbReference>
<dbReference type="GO" id="GO:0005829">
    <property type="term" value="C:cytosol"/>
    <property type="evidence" value="ECO:0007669"/>
    <property type="project" value="TreeGrafter"/>
</dbReference>
<dbReference type="GO" id="GO:0005524">
    <property type="term" value="F:ATP binding"/>
    <property type="evidence" value="ECO:0007669"/>
    <property type="project" value="UniProtKB-UniRule"/>
</dbReference>
<dbReference type="GO" id="GO:0004798">
    <property type="term" value="F:dTMP kinase activity"/>
    <property type="evidence" value="ECO:0007669"/>
    <property type="project" value="UniProtKB-UniRule"/>
</dbReference>
<dbReference type="GO" id="GO:0006233">
    <property type="term" value="P:dTDP biosynthetic process"/>
    <property type="evidence" value="ECO:0007669"/>
    <property type="project" value="InterPro"/>
</dbReference>
<dbReference type="GO" id="GO:0006235">
    <property type="term" value="P:dTTP biosynthetic process"/>
    <property type="evidence" value="ECO:0007669"/>
    <property type="project" value="UniProtKB-UniRule"/>
</dbReference>
<dbReference type="GO" id="GO:0006227">
    <property type="term" value="P:dUDP biosynthetic process"/>
    <property type="evidence" value="ECO:0007669"/>
    <property type="project" value="TreeGrafter"/>
</dbReference>
<dbReference type="CDD" id="cd01672">
    <property type="entry name" value="TMPK"/>
    <property type="match status" value="1"/>
</dbReference>
<dbReference type="FunFam" id="3.40.50.300:FF:000321">
    <property type="entry name" value="Thymidylate kinase"/>
    <property type="match status" value="1"/>
</dbReference>
<dbReference type="Gene3D" id="3.40.50.300">
    <property type="entry name" value="P-loop containing nucleotide triphosphate hydrolases"/>
    <property type="match status" value="1"/>
</dbReference>
<dbReference type="HAMAP" id="MF_00165">
    <property type="entry name" value="Thymidylate_kinase"/>
    <property type="match status" value="1"/>
</dbReference>
<dbReference type="InterPro" id="IPR027417">
    <property type="entry name" value="P-loop_NTPase"/>
</dbReference>
<dbReference type="InterPro" id="IPR039430">
    <property type="entry name" value="Thymidylate_kin-like_dom"/>
</dbReference>
<dbReference type="InterPro" id="IPR018095">
    <property type="entry name" value="Thymidylate_kin_CS"/>
</dbReference>
<dbReference type="InterPro" id="IPR018094">
    <property type="entry name" value="Thymidylate_kinase"/>
</dbReference>
<dbReference type="NCBIfam" id="TIGR00041">
    <property type="entry name" value="DTMP_kinase"/>
    <property type="match status" value="1"/>
</dbReference>
<dbReference type="PANTHER" id="PTHR10344">
    <property type="entry name" value="THYMIDYLATE KINASE"/>
    <property type="match status" value="1"/>
</dbReference>
<dbReference type="PANTHER" id="PTHR10344:SF4">
    <property type="entry name" value="UMP-CMP KINASE 2, MITOCHONDRIAL"/>
    <property type="match status" value="1"/>
</dbReference>
<dbReference type="Pfam" id="PF02223">
    <property type="entry name" value="Thymidylate_kin"/>
    <property type="match status" value="1"/>
</dbReference>
<dbReference type="SUPFAM" id="SSF52540">
    <property type="entry name" value="P-loop containing nucleoside triphosphate hydrolases"/>
    <property type="match status" value="1"/>
</dbReference>
<dbReference type="PROSITE" id="PS01331">
    <property type="entry name" value="THYMIDYLATE_KINASE"/>
    <property type="match status" value="1"/>
</dbReference>
<proteinExistence type="inferred from homology"/>
<evidence type="ECO:0000255" key="1">
    <source>
        <dbReference type="HAMAP-Rule" id="MF_00165"/>
    </source>
</evidence>
<name>KTHY_SHIDS</name>
<gene>
    <name evidence="1" type="primary">tmk</name>
    <name type="ordered locus">SDY_2052</name>
</gene>
<reference key="1">
    <citation type="journal article" date="2005" name="Nucleic Acids Res.">
        <title>Genome dynamics and diversity of Shigella species, the etiologic agents of bacillary dysentery.</title>
        <authorList>
            <person name="Yang F."/>
            <person name="Yang J."/>
            <person name="Zhang X."/>
            <person name="Chen L."/>
            <person name="Jiang Y."/>
            <person name="Yan Y."/>
            <person name="Tang X."/>
            <person name="Wang J."/>
            <person name="Xiong Z."/>
            <person name="Dong J."/>
            <person name="Xue Y."/>
            <person name="Zhu Y."/>
            <person name="Xu X."/>
            <person name="Sun L."/>
            <person name="Chen S."/>
            <person name="Nie H."/>
            <person name="Peng J."/>
            <person name="Xu J."/>
            <person name="Wang Y."/>
            <person name="Yuan Z."/>
            <person name="Wen Y."/>
            <person name="Yao Z."/>
            <person name="Shen Y."/>
            <person name="Qiang B."/>
            <person name="Hou Y."/>
            <person name="Yu J."/>
            <person name="Jin Q."/>
        </authorList>
    </citation>
    <scope>NUCLEOTIDE SEQUENCE [LARGE SCALE GENOMIC DNA]</scope>
    <source>
        <strain>Sd197</strain>
    </source>
</reference>
<protein>
    <recommendedName>
        <fullName evidence="1">Thymidylate kinase</fullName>
        <ecNumber evidence="1">2.7.4.9</ecNumber>
    </recommendedName>
    <alternativeName>
        <fullName evidence="1">dTMP kinase</fullName>
    </alternativeName>
</protein>
<keyword id="KW-0067">ATP-binding</keyword>
<keyword id="KW-0418">Kinase</keyword>
<keyword id="KW-0545">Nucleotide biosynthesis</keyword>
<keyword id="KW-0547">Nucleotide-binding</keyword>
<keyword id="KW-1185">Reference proteome</keyword>
<keyword id="KW-0808">Transferase</keyword>